<organism>
    <name type="scientific">Listeria monocytogenes serotype 4b (strain F2365)</name>
    <dbReference type="NCBI Taxonomy" id="265669"/>
    <lineage>
        <taxon>Bacteria</taxon>
        <taxon>Bacillati</taxon>
        <taxon>Bacillota</taxon>
        <taxon>Bacilli</taxon>
        <taxon>Bacillales</taxon>
        <taxon>Listeriaceae</taxon>
        <taxon>Listeria</taxon>
    </lineage>
</organism>
<accession>Q71YJ7</accession>
<dbReference type="EC" id="3.6.1.-" evidence="1"/>
<dbReference type="EMBL" id="AE017262">
    <property type="protein sequence ID" value="AAT04617.1"/>
    <property type="molecule type" value="Genomic_DNA"/>
</dbReference>
<dbReference type="SMR" id="Q71YJ7"/>
<dbReference type="KEGG" id="lmf:LMOf2365_1847"/>
<dbReference type="HOGENOM" id="CLU_033617_2_1_9"/>
<dbReference type="GO" id="GO:0005737">
    <property type="term" value="C:cytoplasm"/>
    <property type="evidence" value="ECO:0007669"/>
    <property type="project" value="UniProtKB-SubCell"/>
</dbReference>
<dbReference type="GO" id="GO:0005525">
    <property type="term" value="F:GTP binding"/>
    <property type="evidence" value="ECO:0007669"/>
    <property type="project" value="UniProtKB-UniRule"/>
</dbReference>
<dbReference type="GO" id="GO:0003924">
    <property type="term" value="F:GTPase activity"/>
    <property type="evidence" value="ECO:0007669"/>
    <property type="project" value="UniProtKB-UniRule"/>
</dbReference>
<dbReference type="GO" id="GO:0046872">
    <property type="term" value="F:metal ion binding"/>
    <property type="evidence" value="ECO:0007669"/>
    <property type="project" value="UniProtKB-KW"/>
</dbReference>
<dbReference type="GO" id="GO:0019843">
    <property type="term" value="F:rRNA binding"/>
    <property type="evidence" value="ECO:0007669"/>
    <property type="project" value="UniProtKB-KW"/>
</dbReference>
<dbReference type="GO" id="GO:0042274">
    <property type="term" value="P:ribosomal small subunit biogenesis"/>
    <property type="evidence" value="ECO:0007669"/>
    <property type="project" value="UniProtKB-UniRule"/>
</dbReference>
<dbReference type="CDD" id="cd04466">
    <property type="entry name" value="S1_YloQ_GTPase"/>
    <property type="match status" value="1"/>
</dbReference>
<dbReference type="CDD" id="cd01854">
    <property type="entry name" value="YjeQ_EngC"/>
    <property type="match status" value="1"/>
</dbReference>
<dbReference type="Gene3D" id="2.40.50.140">
    <property type="entry name" value="Nucleic acid-binding proteins"/>
    <property type="match status" value="1"/>
</dbReference>
<dbReference type="Gene3D" id="3.40.50.300">
    <property type="entry name" value="P-loop containing nucleotide triphosphate hydrolases"/>
    <property type="match status" value="1"/>
</dbReference>
<dbReference type="Gene3D" id="1.10.40.50">
    <property type="entry name" value="Probable gtpase engc, domain 3"/>
    <property type="match status" value="1"/>
</dbReference>
<dbReference type="HAMAP" id="MF_01820">
    <property type="entry name" value="GTPase_RsgA"/>
    <property type="match status" value="1"/>
</dbReference>
<dbReference type="InterPro" id="IPR030378">
    <property type="entry name" value="G_CP_dom"/>
</dbReference>
<dbReference type="InterPro" id="IPR012340">
    <property type="entry name" value="NA-bd_OB-fold"/>
</dbReference>
<dbReference type="InterPro" id="IPR027417">
    <property type="entry name" value="P-loop_NTPase"/>
</dbReference>
<dbReference type="InterPro" id="IPR004881">
    <property type="entry name" value="Ribosome_biogen_GTPase_RsgA"/>
</dbReference>
<dbReference type="InterPro" id="IPR010914">
    <property type="entry name" value="RsgA_GTPase_dom"/>
</dbReference>
<dbReference type="InterPro" id="IPR031944">
    <property type="entry name" value="RsgA_N"/>
</dbReference>
<dbReference type="NCBIfam" id="TIGR00157">
    <property type="entry name" value="ribosome small subunit-dependent GTPase A"/>
    <property type="match status" value="1"/>
</dbReference>
<dbReference type="PANTHER" id="PTHR32120">
    <property type="entry name" value="SMALL RIBOSOMAL SUBUNIT BIOGENESIS GTPASE RSGA"/>
    <property type="match status" value="1"/>
</dbReference>
<dbReference type="PANTHER" id="PTHR32120:SF11">
    <property type="entry name" value="SMALL RIBOSOMAL SUBUNIT BIOGENESIS GTPASE RSGA 1, MITOCHONDRIAL-RELATED"/>
    <property type="match status" value="1"/>
</dbReference>
<dbReference type="Pfam" id="PF03193">
    <property type="entry name" value="RsgA_GTPase"/>
    <property type="match status" value="1"/>
</dbReference>
<dbReference type="Pfam" id="PF16745">
    <property type="entry name" value="RsgA_N"/>
    <property type="match status" value="1"/>
</dbReference>
<dbReference type="SUPFAM" id="SSF50249">
    <property type="entry name" value="Nucleic acid-binding proteins"/>
    <property type="match status" value="1"/>
</dbReference>
<dbReference type="SUPFAM" id="SSF52540">
    <property type="entry name" value="P-loop containing nucleoside triphosphate hydrolases"/>
    <property type="match status" value="1"/>
</dbReference>
<dbReference type="PROSITE" id="PS50936">
    <property type="entry name" value="ENGC_GTPASE"/>
    <property type="match status" value="1"/>
</dbReference>
<dbReference type="PROSITE" id="PS51721">
    <property type="entry name" value="G_CP"/>
    <property type="match status" value="1"/>
</dbReference>
<proteinExistence type="inferred from homology"/>
<comment type="function">
    <text evidence="1">One of several proteins that assist in the late maturation steps of the functional core of the 30S ribosomal subunit. Helps release RbfA from mature subunits. May play a role in the assembly of ribosomal proteins into the subunit. Circularly permuted GTPase that catalyzes slow GTP hydrolysis, GTPase activity is stimulated by the 30S ribosomal subunit.</text>
</comment>
<comment type="cofactor">
    <cofactor evidence="1">
        <name>Zn(2+)</name>
        <dbReference type="ChEBI" id="CHEBI:29105"/>
    </cofactor>
    <text evidence="1">Binds 1 zinc ion per subunit.</text>
</comment>
<comment type="subunit">
    <text evidence="1">Monomer. Associates with 30S ribosomal subunit, binds 16S rRNA.</text>
</comment>
<comment type="subcellular location">
    <subcellularLocation>
        <location evidence="1">Cytoplasm</location>
    </subcellularLocation>
</comment>
<comment type="similarity">
    <text evidence="1">Belongs to the TRAFAC class YlqF/YawG GTPase family. RsgA subfamily.</text>
</comment>
<sequence length="291" mass="32743">MLEGQIIKALSGFYYVFSEGKVYQCRARGNFRKRNISPLVGDDVEFQIENKTDGYILDVMSRENALVRPPVANIDIAILVFSAVEPDFSTNLADRFLVAIEKEDIKPVICISKMDLASESEKEQIAVYKDIYEAIGYDVFVTNDEPDKEAIKDYISGKTAVIAGQSGVGKSTLLNSLNSDLTLKTAEISNALGRGKHTTRHVELMPIGDGFVADTPGFSSIEWDDLQPETLQFCFPEMEDRRSGCKFRGCMHDNEPNCAVKTAVEANEIAEFRYKHYIQILQELKNRKPRY</sequence>
<reference key="1">
    <citation type="journal article" date="2004" name="Nucleic Acids Res.">
        <title>Whole genome comparisons of serotype 4b and 1/2a strains of the food-borne pathogen Listeria monocytogenes reveal new insights into the core genome components of this species.</title>
        <authorList>
            <person name="Nelson K.E."/>
            <person name="Fouts D.E."/>
            <person name="Mongodin E.F."/>
            <person name="Ravel J."/>
            <person name="DeBoy R.T."/>
            <person name="Kolonay J.F."/>
            <person name="Rasko D.A."/>
            <person name="Angiuoli S.V."/>
            <person name="Gill S.R."/>
            <person name="Paulsen I.T."/>
            <person name="Peterson J.D."/>
            <person name="White O."/>
            <person name="Nelson W.C."/>
            <person name="Nierman W.C."/>
            <person name="Beanan M.J."/>
            <person name="Brinkac L.M."/>
            <person name="Daugherty S.C."/>
            <person name="Dodson R.J."/>
            <person name="Durkin A.S."/>
            <person name="Madupu R."/>
            <person name="Haft D.H."/>
            <person name="Selengut J."/>
            <person name="Van Aken S.E."/>
            <person name="Khouri H.M."/>
            <person name="Fedorova N."/>
            <person name="Forberger H.A."/>
            <person name="Tran B."/>
            <person name="Kathariou S."/>
            <person name="Wonderling L.D."/>
            <person name="Uhlich G.A."/>
            <person name="Bayles D.O."/>
            <person name="Luchansky J.B."/>
            <person name="Fraser C.M."/>
        </authorList>
    </citation>
    <scope>NUCLEOTIDE SEQUENCE [LARGE SCALE GENOMIC DNA]</scope>
    <source>
        <strain>F2365</strain>
    </source>
</reference>
<gene>
    <name evidence="1" type="primary">rsgA1</name>
    <name type="ordered locus">LMOf2365_1847</name>
</gene>
<keyword id="KW-0963">Cytoplasm</keyword>
<keyword id="KW-0342">GTP-binding</keyword>
<keyword id="KW-0378">Hydrolase</keyword>
<keyword id="KW-0479">Metal-binding</keyword>
<keyword id="KW-0547">Nucleotide-binding</keyword>
<keyword id="KW-0690">Ribosome biogenesis</keyword>
<keyword id="KW-0694">RNA-binding</keyword>
<keyword id="KW-0699">rRNA-binding</keyword>
<keyword id="KW-0862">Zinc</keyword>
<feature type="chain" id="PRO_0000171489" description="Small ribosomal subunit biogenesis GTPase RsgA 1">
    <location>
        <begin position="1"/>
        <end position="291"/>
    </location>
</feature>
<feature type="domain" description="CP-type G" evidence="2">
    <location>
        <begin position="63"/>
        <end position="221"/>
    </location>
</feature>
<feature type="binding site" evidence="1">
    <location>
        <begin position="112"/>
        <end position="115"/>
    </location>
    <ligand>
        <name>GTP</name>
        <dbReference type="ChEBI" id="CHEBI:37565"/>
    </ligand>
</feature>
<feature type="binding site" evidence="1">
    <location>
        <begin position="164"/>
        <end position="172"/>
    </location>
    <ligand>
        <name>GTP</name>
        <dbReference type="ChEBI" id="CHEBI:37565"/>
    </ligand>
</feature>
<feature type="binding site" evidence="1">
    <location>
        <position position="245"/>
    </location>
    <ligand>
        <name>Zn(2+)</name>
        <dbReference type="ChEBI" id="CHEBI:29105"/>
    </ligand>
</feature>
<feature type="binding site" evidence="1">
    <location>
        <position position="250"/>
    </location>
    <ligand>
        <name>Zn(2+)</name>
        <dbReference type="ChEBI" id="CHEBI:29105"/>
    </ligand>
</feature>
<feature type="binding site" evidence="1">
    <location>
        <position position="252"/>
    </location>
    <ligand>
        <name>Zn(2+)</name>
        <dbReference type="ChEBI" id="CHEBI:29105"/>
    </ligand>
</feature>
<feature type="binding site" evidence="1">
    <location>
        <position position="258"/>
    </location>
    <ligand>
        <name>Zn(2+)</name>
        <dbReference type="ChEBI" id="CHEBI:29105"/>
    </ligand>
</feature>
<name>RSGA1_LISMF</name>
<protein>
    <recommendedName>
        <fullName evidence="1">Small ribosomal subunit biogenesis GTPase RsgA 1</fullName>
        <ecNumber evidence="1">3.6.1.-</ecNumber>
    </recommendedName>
</protein>
<evidence type="ECO:0000255" key="1">
    <source>
        <dbReference type="HAMAP-Rule" id="MF_01820"/>
    </source>
</evidence>
<evidence type="ECO:0000255" key="2">
    <source>
        <dbReference type="PROSITE-ProRule" id="PRU01058"/>
    </source>
</evidence>